<name>MNME_CUPMC</name>
<protein>
    <recommendedName>
        <fullName evidence="1">tRNA modification GTPase MnmE</fullName>
        <ecNumber evidence="1">3.6.-.-</ecNumber>
    </recommendedName>
</protein>
<gene>
    <name evidence="1" type="primary">mnmE</name>
    <name evidence="1" type="synonym">trmE</name>
    <name type="ordered locus">Rmet_3610</name>
</gene>
<comment type="function">
    <text evidence="1">Exhibits a very high intrinsic GTPase hydrolysis rate. Involved in the addition of a carboxymethylaminomethyl (cmnm) group at the wobble position (U34) of certain tRNAs, forming tRNA-cmnm(5)s(2)U34.</text>
</comment>
<comment type="cofactor">
    <cofactor evidence="1">
        <name>K(+)</name>
        <dbReference type="ChEBI" id="CHEBI:29103"/>
    </cofactor>
    <text evidence="1">Binds 1 potassium ion per subunit.</text>
</comment>
<comment type="subunit">
    <text evidence="1">Homodimer. Heterotetramer of two MnmE and two MnmG subunits.</text>
</comment>
<comment type="subcellular location">
    <subcellularLocation>
        <location evidence="1">Cytoplasm</location>
    </subcellularLocation>
</comment>
<comment type="similarity">
    <text evidence="1">Belongs to the TRAFAC class TrmE-Era-EngA-EngB-Septin-like GTPase superfamily. TrmE GTPase family.</text>
</comment>
<feature type="chain" id="PRO_0000345881" description="tRNA modification GTPase MnmE">
    <location>
        <begin position="1"/>
        <end position="475"/>
    </location>
</feature>
<feature type="domain" description="TrmE-type G">
    <location>
        <begin position="220"/>
        <end position="397"/>
    </location>
</feature>
<feature type="binding site" evidence="1">
    <location>
        <position position="24"/>
    </location>
    <ligand>
        <name>(6S)-5-formyl-5,6,7,8-tetrahydrofolate</name>
        <dbReference type="ChEBI" id="CHEBI:57457"/>
    </ligand>
</feature>
<feature type="binding site" evidence="1">
    <location>
        <position position="81"/>
    </location>
    <ligand>
        <name>(6S)-5-formyl-5,6,7,8-tetrahydrofolate</name>
        <dbReference type="ChEBI" id="CHEBI:57457"/>
    </ligand>
</feature>
<feature type="binding site" evidence="1">
    <location>
        <position position="124"/>
    </location>
    <ligand>
        <name>(6S)-5-formyl-5,6,7,8-tetrahydrofolate</name>
        <dbReference type="ChEBI" id="CHEBI:57457"/>
    </ligand>
</feature>
<feature type="binding site" evidence="1">
    <location>
        <begin position="230"/>
        <end position="235"/>
    </location>
    <ligand>
        <name>GTP</name>
        <dbReference type="ChEBI" id="CHEBI:37565"/>
    </ligand>
</feature>
<feature type="binding site" evidence="1">
    <location>
        <position position="230"/>
    </location>
    <ligand>
        <name>K(+)</name>
        <dbReference type="ChEBI" id="CHEBI:29103"/>
    </ligand>
</feature>
<feature type="binding site" evidence="1">
    <location>
        <position position="234"/>
    </location>
    <ligand>
        <name>Mg(2+)</name>
        <dbReference type="ChEBI" id="CHEBI:18420"/>
    </ligand>
</feature>
<feature type="binding site" evidence="1">
    <location>
        <begin position="249"/>
        <end position="255"/>
    </location>
    <ligand>
        <name>GTP</name>
        <dbReference type="ChEBI" id="CHEBI:37565"/>
    </ligand>
</feature>
<feature type="binding site" evidence="1">
    <location>
        <position position="249"/>
    </location>
    <ligand>
        <name>K(+)</name>
        <dbReference type="ChEBI" id="CHEBI:29103"/>
    </ligand>
</feature>
<feature type="binding site" evidence="1">
    <location>
        <position position="251"/>
    </location>
    <ligand>
        <name>K(+)</name>
        <dbReference type="ChEBI" id="CHEBI:29103"/>
    </ligand>
</feature>
<feature type="binding site" evidence="1">
    <location>
        <position position="254"/>
    </location>
    <ligand>
        <name>K(+)</name>
        <dbReference type="ChEBI" id="CHEBI:29103"/>
    </ligand>
</feature>
<feature type="binding site" evidence="1">
    <location>
        <position position="255"/>
    </location>
    <ligand>
        <name>Mg(2+)</name>
        <dbReference type="ChEBI" id="CHEBI:18420"/>
    </ligand>
</feature>
<feature type="binding site" evidence="1">
    <location>
        <begin position="274"/>
        <end position="277"/>
    </location>
    <ligand>
        <name>GTP</name>
        <dbReference type="ChEBI" id="CHEBI:37565"/>
    </ligand>
</feature>
<feature type="binding site" evidence="1">
    <location>
        <begin position="378"/>
        <end position="380"/>
    </location>
    <ligand>
        <name>GTP</name>
        <dbReference type="ChEBI" id="CHEBI:37565"/>
    </ligand>
</feature>
<feature type="binding site" evidence="1">
    <location>
        <position position="475"/>
    </location>
    <ligand>
        <name>(6S)-5-formyl-5,6,7,8-tetrahydrofolate</name>
        <dbReference type="ChEBI" id="CHEBI:57457"/>
    </ligand>
</feature>
<reference key="1">
    <citation type="journal article" date="2010" name="PLoS ONE">
        <title>The complete genome sequence of Cupriavidus metallidurans strain CH34, a master survivalist in harsh and anthropogenic environments.</title>
        <authorList>
            <person name="Janssen P.J."/>
            <person name="Van Houdt R."/>
            <person name="Moors H."/>
            <person name="Monsieurs P."/>
            <person name="Morin N."/>
            <person name="Michaux A."/>
            <person name="Benotmane M.A."/>
            <person name="Leys N."/>
            <person name="Vallaeys T."/>
            <person name="Lapidus A."/>
            <person name="Monchy S."/>
            <person name="Medigue C."/>
            <person name="Taghavi S."/>
            <person name="McCorkle S."/>
            <person name="Dunn J."/>
            <person name="van der Lelie D."/>
            <person name="Mergeay M."/>
        </authorList>
    </citation>
    <scope>NUCLEOTIDE SEQUENCE [LARGE SCALE GENOMIC DNA]</scope>
    <source>
        <strain>ATCC 43123 / DSM 2839 / NBRC 102507 / CH34</strain>
    </source>
</reference>
<proteinExistence type="inferred from homology"/>
<evidence type="ECO:0000255" key="1">
    <source>
        <dbReference type="HAMAP-Rule" id="MF_00379"/>
    </source>
</evidence>
<keyword id="KW-0963">Cytoplasm</keyword>
<keyword id="KW-0342">GTP-binding</keyword>
<keyword id="KW-0378">Hydrolase</keyword>
<keyword id="KW-0460">Magnesium</keyword>
<keyword id="KW-0479">Metal-binding</keyword>
<keyword id="KW-0547">Nucleotide-binding</keyword>
<keyword id="KW-0630">Potassium</keyword>
<keyword id="KW-1185">Reference proteome</keyword>
<keyword id="KW-0819">tRNA processing</keyword>
<sequence length="475" mass="50990">MTVSQIPIAAIATAPGRGGIGVVRVSGPDVGAVMRAVCGRALQPRHATYLPFLDARGNVIDHGLALYFPAPNSYTGEEVLELQGHGGPVVMQMLLSRCLEAGKDIGLRVAEPGEFTRRAFLNDKLDLAQAEAVADLIEASTEAAARSAARSMEGEFSKAIHALVEKVIHLRMLVEATLDFPEEEIDFLEASNARGQLTRIREDLAGVLKQARQGSLLREGLSVVLAGQPNVGKSSLLNALAGSDLAIVTPIAGTTRDRVRETIQIDGIPLHIIDTAGLRDDAADEVERIGIERTWEAIRHADIVLHLIDAADYIEHGISETDDHIDDRLSGQLPPGSPIVRVINKIDLAPSVGAMGFGGNRPHVVAANGPNPTEIWISARTGAGIDLMRSELLRLIGWQSGNEGAFLARERHLIALRNAESHLELAEASASQHAQALDLFAEELRLAQDHLNSITGEFTSDDLLGTIFTRFCIGK</sequence>
<accession>Q1LH94</accession>
<organism>
    <name type="scientific">Cupriavidus metallidurans (strain ATCC 43123 / DSM 2839 / NBRC 102507 / CH34)</name>
    <name type="common">Ralstonia metallidurans</name>
    <dbReference type="NCBI Taxonomy" id="266264"/>
    <lineage>
        <taxon>Bacteria</taxon>
        <taxon>Pseudomonadati</taxon>
        <taxon>Pseudomonadota</taxon>
        <taxon>Betaproteobacteria</taxon>
        <taxon>Burkholderiales</taxon>
        <taxon>Burkholderiaceae</taxon>
        <taxon>Cupriavidus</taxon>
    </lineage>
</organism>
<dbReference type="EC" id="3.6.-.-" evidence="1"/>
<dbReference type="EMBL" id="CP000352">
    <property type="protein sequence ID" value="ABF10482.1"/>
    <property type="molecule type" value="Genomic_DNA"/>
</dbReference>
<dbReference type="RefSeq" id="WP_011518024.1">
    <property type="nucleotide sequence ID" value="NC_007973.1"/>
</dbReference>
<dbReference type="SMR" id="Q1LH94"/>
<dbReference type="STRING" id="266264.Rmet_3610"/>
<dbReference type="KEGG" id="rme:Rmet_3610"/>
<dbReference type="eggNOG" id="COG0486">
    <property type="taxonomic scope" value="Bacteria"/>
</dbReference>
<dbReference type="HOGENOM" id="CLU_019624_4_1_4"/>
<dbReference type="Proteomes" id="UP000002429">
    <property type="component" value="Chromosome"/>
</dbReference>
<dbReference type="GO" id="GO:0005829">
    <property type="term" value="C:cytosol"/>
    <property type="evidence" value="ECO:0007669"/>
    <property type="project" value="TreeGrafter"/>
</dbReference>
<dbReference type="GO" id="GO:0005525">
    <property type="term" value="F:GTP binding"/>
    <property type="evidence" value="ECO:0007669"/>
    <property type="project" value="UniProtKB-UniRule"/>
</dbReference>
<dbReference type="GO" id="GO:0003924">
    <property type="term" value="F:GTPase activity"/>
    <property type="evidence" value="ECO:0007669"/>
    <property type="project" value="UniProtKB-UniRule"/>
</dbReference>
<dbReference type="GO" id="GO:0046872">
    <property type="term" value="F:metal ion binding"/>
    <property type="evidence" value="ECO:0007669"/>
    <property type="project" value="UniProtKB-KW"/>
</dbReference>
<dbReference type="GO" id="GO:0030488">
    <property type="term" value="P:tRNA methylation"/>
    <property type="evidence" value="ECO:0007669"/>
    <property type="project" value="TreeGrafter"/>
</dbReference>
<dbReference type="GO" id="GO:0002098">
    <property type="term" value="P:tRNA wobble uridine modification"/>
    <property type="evidence" value="ECO:0007669"/>
    <property type="project" value="TreeGrafter"/>
</dbReference>
<dbReference type="CDD" id="cd04164">
    <property type="entry name" value="trmE"/>
    <property type="match status" value="1"/>
</dbReference>
<dbReference type="CDD" id="cd14858">
    <property type="entry name" value="TrmE_N"/>
    <property type="match status" value="1"/>
</dbReference>
<dbReference type="Gene3D" id="3.40.50.300">
    <property type="entry name" value="P-loop containing nucleotide triphosphate hydrolases"/>
    <property type="match status" value="1"/>
</dbReference>
<dbReference type="Gene3D" id="3.30.1360.120">
    <property type="entry name" value="Probable tRNA modification gtpase trme, domain 1"/>
    <property type="match status" value="1"/>
</dbReference>
<dbReference type="Gene3D" id="1.20.120.430">
    <property type="entry name" value="tRNA modification GTPase MnmE domain 2"/>
    <property type="match status" value="1"/>
</dbReference>
<dbReference type="HAMAP" id="MF_00379">
    <property type="entry name" value="GTPase_MnmE"/>
    <property type="match status" value="1"/>
</dbReference>
<dbReference type="InterPro" id="IPR031168">
    <property type="entry name" value="G_TrmE"/>
</dbReference>
<dbReference type="InterPro" id="IPR006073">
    <property type="entry name" value="GTP-bd"/>
</dbReference>
<dbReference type="InterPro" id="IPR018948">
    <property type="entry name" value="GTP-bd_TrmE_N"/>
</dbReference>
<dbReference type="InterPro" id="IPR004520">
    <property type="entry name" value="GTPase_MnmE"/>
</dbReference>
<dbReference type="InterPro" id="IPR027368">
    <property type="entry name" value="MnmE_dom2"/>
</dbReference>
<dbReference type="InterPro" id="IPR025867">
    <property type="entry name" value="MnmE_helical"/>
</dbReference>
<dbReference type="InterPro" id="IPR027417">
    <property type="entry name" value="P-loop_NTPase"/>
</dbReference>
<dbReference type="InterPro" id="IPR005225">
    <property type="entry name" value="Small_GTP-bd"/>
</dbReference>
<dbReference type="InterPro" id="IPR027266">
    <property type="entry name" value="TrmE/GcvT_dom1"/>
</dbReference>
<dbReference type="NCBIfam" id="TIGR00450">
    <property type="entry name" value="mnmE_trmE_thdF"/>
    <property type="match status" value="1"/>
</dbReference>
<dbReference type="NCBIfam" id="NF003661">
    <property type="entry name" value="PRK05291.1-3"/>
    <property type="match status" value="1"/>
</dbReference>
<dbReference type="NCBIfam" id="TIGR00231">
    <property type="entry name" value="small_GTP"/>
    <property type="match status" value="1"/>
</dbReference>
<dbReference type="PANTHER" id="PTHR42714">
    <property type="entry name" value="TRNA MODIFICATION GTPASE GTPBP3"/>
    <property type="match status" value="1"/>
</dbReference>
<dbReference type="PANTHER" id="PTHR42714:SF2">
    <property type="entry name" value="TRNA MODIFICATION GTPASE GTPBP3, MITOCHONDRIAL"/>
    <property type="match status" value="1"/>
</dbReference>
<dbReference type="Pfam" id="PF01926">
    <property type="entry name" value="MMR_HSR1"/>
    <property type="match status" value="1"/>
</dbReference>
<dbReference type="Pfam" id="PF12631">
    <property type="entry name" value="MnmE_helical"/>
    <property type="match status" value="1"/>
</dbReference>
<dbReference type="Pfam" id="PF10396">
    <property type="entry name" value="TrmE_N"/>
    <property type="match status" value="1"/>
</dbReference>
<dbReference type="PRINTS" id="PR00326">
    <property type="entry name" value="GTP1OBG"/>
</dbReference>
<dbReference type="SUPFAM" id="SSF52540">
    <property type="entry name" value="P-loop containing nucleoside triphosphate hydrolases"/>
    <property type="match status" value="1"/>
</dbReference>
<dbReference type="SUPFAM" id="SSF116878">
    <property type="entry name" value="TrmE connector domain"/>
    <property type="match status" value="1"/>
</dbReference>
<dbReference type="PROSITE" id="PS51709">
    <property type="entry name" value="G_TRME"/>
    <property type="match status" value="1"/>
</dbReference>